<name>KDSB1_HYDCU</name>
<sequence length="259" mass="29037">MSFIVIIPARYESSRLLGKPLMDIQGKPMVEWTWMQAKKSGATRVVIATESDRVKAVCESFGAEVCLTSERHESGTERIAEVASLLGLNDDDILVNVQGDEPLLPPDLIHQVAEGLETHPNTLMATLCEPILDVETVFDPHAVKVIRDCNNYALNFTRAPMPWSRDTFGSEPKTLPGNWPYRRHIGLYAYRSGFVKRYVEWPVCALEQVEKLEQLRVLWHGEKILVLDALCEAGVGVDTEQDLIKVRKIMANLNPDGAL</sequence>
<reference key="1">
    <citation type="journal article" date="2006" name="PLoS Biol.">
        <title>The genome of deep-sea vent chemolithoautotroph Thiomicrospira crunogena XCL-2.</title>
        <authorList>
            <person name="Scott K.M."/>
            <person name="Sievert S.M."/>
            <person name="Abril F.N."/>
            <person name="Ball L.A."/>
            <person name="Barrett C.J."/>
            <person name="Blake R.A."/>
            <person name="Boller A.J."/>
            <person name="Chain P.S.G."/>
            <person name="Clark J.A."/>
            <person name="Davis C.R."/>
            <person name="Detter C."/>
            <person name="Do K.F."/>
            <person name="Dobrinski K.P."/>
            <person name="Faza B.I."/>
            <person name="Fitzpatrick K.A."/>
            <person name="Freyermuth S.K."/>
            <person name="Harmer T.L."/>
            <person name="Hauser L.J."/>
            <person name="Huegler M."/>
            <person name="Kerfeld C.A."/>
            <person name="Klotz M.G."/>
            <person name="Kong W.W."/>
            <person name="Land M."/>
            <person name="Lapidus A."/>
            <person name="Larimer F.W."/>
            <person name="Longo D.L."/>
            <person name="Lucas S."/>
            <person name="Malfatti S.A."/>
            <person name="Massey S.E."/>
            <person name="Martin D.D."/>
            <person name="McCuddin Z."/>
            <person name="Meyer F."/>
            <person name="Moore J.L."/>
            <person name="Ocampo L.H. Jr."/>
            <person name="Paul J.H."/>
            <person name="Paulsen I.T."/>
            <person name="Reep D.K."/>
            <person name="Ren Q."/>
            <person name="Ross R.L."/>
            <person name="Sato P.Y."/>
            <person name="Thomas P."/>
            <person name="Tinkham L.E."/>
            <person name="Zeruth G.T."/>
        </authorList>
    </citation>
    <scope>NUCLEOTIDE SEQUENCE [LARGE SCALE GENOMIC DNA]</scope>
    <source>
        <strain>DSM 25203 / XCL-2</strain>
    </source>
</reference>
<keyword id="KW-0963">Cytoplasm</keyword>
<keyword id="KW-0448">Lipopolysaccharide biosynthesis</keyword>
<keyword id="KW-0548">Nucleotidyltransferase</keyword>
<keyword id="KW-0808">Transferase</keyword>
<feature type="chain" id="PRO_0000370166" description="3-deoxy-manno-octulosonate cytidylyltransferase 1">
    <location>
        <begin position="1"/>
        <end position="259"/>
    </location>
</feature>
<comment type="function">
    <text evidence="1">Activates KDO (a required 8-carbon sugar) for incorporation into bacterial lipopolysaccharide in Gram-negative bacteria.</text>
</comment>
<comment type="catalytic activity">
    <reaction evidence="1">
        <text>3-deoxy-alpha-D-manno-oct-2-ulosonate + CTP = CMP-3-deoxy-beta-D-manno-octulosonate + diphosphate</text>
        <dbReference type="Rhea" id="RHEA:23448"/>
        <dbReference type="ChEBI" id="CHEBI:33019"/>
        <dbReference type="ChEBI" id="CHEBI:37563"/>
        <dbReference type="ChEBI" id="CHEBI:85986"/>
        <dbReference type="ChEBI" id="CHEBI:85987"/>
        <dbReference type="EC" id="2.7.7.38"/>
    </reaction>
</comment>
<comment type="pathway">
    <text evidence="1">Nucleotide-sugar biosynthesis; CMP-3-deoxy-D-manno-octulosonate biosynthesis; CMP-3-deoxy-D-manno-octulosonate from 3-deoxy-D-manno-octulosonate and CTP: step 1/1.</text>
</comment>
<comment type="pathway">
    <text evidence="1">Bacterial outer membrane biogenesis; lipopolysaccharide biosynthesis.</text>
</comment>
<comment type="subcellular location">
    <subcellularLocation>
        <location evidence="1">Cytoplasm</location>
    </subcellularLocation>
</comment>
<comment type="similarity">
    <text evidence="1">Belongs to the KdsB family.</text>
</comment>
<dbReference type="EC" id="2.7.7.38" evidence="1"/>
<dbReference type="EMBL" id="CP000109">
    <property type="protein sequence ID" value="ABB41555.1"/>
    <property type="molecule type" value="Genomic_DNA"/>
</dbReference>
<dbReference type="SMR" id="Q31H18"/>
<dbReference type="STRING" id="317025.Tcr_0960"/>
<dbReference type="KEGG" id="tcx:Tcr_0960"/>
<dbReference type="eggNOG" id="COG1212">
    <property type="taxonomic scope" value="Bacteria"/>
</dbReference>
<dbReference type="HOGENOM" id="CLU_065038_1_0_6"/>
<dbReference type="OrthoDB" id="9815559at2"/>
<dbReference type="UniPathway" id="UPA00030"/>
<dbReference type="UniPathway" id="UPA00358">
    <property type="reaction ID" value="UER00476"/>
</dbReference>
<dbReference type="GO" id="GO:0005829">
    <property type="term" value="C:cytosol"/>
    <property type="evidence" value="ECO:0007669"/>
    <property type="project" value="TreeGrafter"/>
</dbReference>
<dbReference type="GO" id="GO:0008690">
    <property type="term" value="F:3-deoxy-manno-octulosonate cytidylyltransferase activity"/>
    <property type="evidence" value="ECO:0007669"/>
    <property type="project" value="UniProtKB-UniRule"/>
</dbReference>
<dbReference type="GO" id="GO:0033468">
    <property type="term" value="P:CMP-keto-3-deoxy-D-manno-octulosonic acid biosynthetic process"/>
    <property type="evidence" value="ECO:0007669"/>
    <property type="project" value="UniProtKB-UniRule"/>
</dbReference>
<dbReference type="GO" id="GO:0009103">
    <property type="term" value="P:lipopolysaccharide biosynthetic process"/>
    <property type="evidence" value="ECO:0007669"/>
    <property type="project" value="UniProtKB-UniRule"/>
</dbReference>
<dbReference type="CDD" id="cd02517">
    <property type="entry name" value="CMP-KDO-Synthetase"/>
    <property type="match status" value="1"/>
</dbReference>
<dbReference type="FunFam" id="3.90.550.10:FF:000011">
    <property type="entry name" value="3-deoxy-manno-octulosonate cytidylyltransferase"/>
    <property type="match status" value="1"/>
</dbReference>
<dbReference type="Gene3D" id="3.90.550.10">
    <property type="entry name" value="Spore Coat Polysaccharide Biosynthesis Protein SpsA, Chain A"/>
    <property type="match status" value="1"/>
</dbReference>
<dbReference type="HAMAP" id="MF_00057">
    <property type="entry name" value="KdsB"/>
    <property type="match status" value="1"/>
</dbReference>
<dbReference type="InterPro" id="IPR003329">
    <property type="entry name" value="Cytidylyl_trans"/>
</dbReference>
<dbReference type="InterPro" id="IPR004528">
    <property type="entry name" value="KdsB"/>
</dbReference>
<dbReference type="InterPro" id="IPR029044">
    <property type="entry name" value="Nucleotide-diphossugar_trans"/>
</dbReference>
<dbReference type="NCBIfam" id="TIGR00466">
    <property type="entry name" value="kdsB"/>
    <property type="match status" value="1"/>
</dbReference>
<dbReference type="NCBIfam" id="NF003950">
    <property type="entry name" value="PRK05450.1-3"/>
    <property type="match status" value="1"/>
</dbReference>
<dbReference type="NCBIfam" id="NF003952">
    <property type="entry name" value="PRK05450.1-5"/>
    <property type="match status" value="1"/>
</dbReference>
<dbReference type="NCBIfam" id="NF009905">
    <property type="entry name" value="PRK13368.1"/>
    <property type="match status" value="1"/>
</dbReference>
<dbReference type="PANTHER" id="PTHR42866">
    <property type="entry name" value="3-DEOXY-MANNO-OCTULOSONATE CYTIDYLYLTRANSFERASE"/>
    <property type="match status" value="1"/>
</dbReference>
<dbReference type="PANTHER" id="PTHR42866:SF2">
    <property type="entry name" value="3-DEOXY-MANNO-OCTULOSONATE CYTIDYLYLTRANSFERASE, MITOCHONDRIAL"/>
    <property type="match status" value="1"/>
</dbReference>
<dbReference type="Pfam" id="PF02348">
    <property type="entry name" value="CTP_transf_3"/>
    <property type="match status" value="1"/>
</dbReference>
<dbReference type="SUPFAM" id="SSF53448">
    <property type="entry name" value="Nucleotide-diphospho-sugar transferases"/>
    <property type="match status" value="1"/>
</dbReference>
<accession>Q31H18</accession>
<organism>
    <name type="scientific">Hydrogenovibrio crunogenus (strain DSM 25203 / XCL-2)</name>
    <name type="common">Thiomicrospira crunogena</name>
    <dbReference type="NCBI Taxonomy" id="317025"/>
    <lineage>
        <taxon>Bacteria</taxon>
        <taxon>Pseudomonadati</taxon>
        <taxon>Pseudomonadota</taxon>
        <taxon>Gammaproteobacteria</taxon>
        <taxon>Thiotrichales</taxon>
        <taxon>Piscirickettsiaceae</taxon>
        <taxon>Hydrogenovibrio</taxon>
    </lineage>
</organism>
<evidence type="ECO:0000255" key="1">
    <source>
        <dbReference type="HAMAP-Rule" id="MF_00057"/>
    </source>
</evidence>
<protein>
    <recommendedName>
        <fullName evidence="1">3-deoxy-manno-octulosonate cytidylyltransferase 1</fullName>
        <ecNumber evidence="1">2.7.7.38</ecNumber>
    </recommendedName>
    <alternativeName>
        <fullName evidence="1">CMP-2-keto-3-deoxyoctulosonic acid synthase 1</fullName>
        <shortName evidence="1">CKS 1</shortName>
        <shortName evidence="1">CMP-KDO synthase 1</shortName>
    </alternativeName>
</protein>
<gene>
    <name evidence="1" type="primary">kdsB1</name>
    <name type="ordered locus">Tcr_0960</name>
</gene>
<proteinExistence type="inferred from homology"/>